<accession>Q38XS5</accession>
<protein>
    <recommendedName>
        <fullName evidence="1">Phosphate acyltransferase</fullName>
        <ecNumber evidence="1">2.3.1.274</ecNumber>
    </recommendedName>
    <alternativeName>
        <fullName evidence="1">Acyl-ACP phosphotransacylase</fullName>
    </alternativeName>
    <alternativeName>
        <fullName evidence="1">Acyl-[acyl-carrier-protein]--phosphate acyltransferase</fullName>
    </alternativeName>
    <alternativeName>
        <fullName evidence="1">Phosphate-acyl-ACP acyltransferase</fullName>
    </alternativeName>
</protein>
<gene>
    <name evidence="1" type="primary">plsX</name>
    <name type="ordered locus">LCA_0700</name>
</gene>
<evidence type="ECO:0000255" key="1">
    <source>
        <dbReference type="HAMAP-Rule" id="MF_00019"/>
    </source>
</evidence>
<reference key="1">
    <citation type="journal article" date="2005" name="Nat. Biotechnol.">
        <title>The complete genome sequence of the meat-borne lactic acid bacterium Lactobacillus sakei 23K.</title>
        <authorList>
            <person name="Chaillou S."/>
            <person name="Champomier-Verges M.-C."/>
            <person name="Cornet M."/>
            <person name="Crutz-Le Coq A.-M."/>
            <person name="Dudez A.-M."/>
            <person name="Martin V."/>
            <person name="Beaufils S."/>
            <person name="Darbon-Rongere E."/>
            <person name="Bossy R."/>
            <person name="Loux V."/>
            <person name="Zagorec M."/>
        </authorList>
    </citation>
    <scope>NUCLEOTIDE SEQUENCE [LARGE SCALE GENOMIC DNA]</scope>
    <source>
        <strain>23K</strain>
    </source>
</reference>
<organism>
    <name type="scientific">Latilactobacillus sakei subsp. sakei (strain 23K)</name>
    <name type="common">Lactobacillus sakei subsp. sakei</name>
    <dbReference type="NCBI Taxonomy" id="314315"/>
    <lineage>
        <taxon>Bacteria</taxon>
        <taxon>Bacillati</taxon>
        <taxon>Bacillota</taxon>
        <taxon>Bacilli</taxon>
        <taxon>Lactobacillales</taxon>
        <taxon>Lactobacillaceae</taxon>
        <taxon>Latilactobacillus</taxon>
    </lineage>
</organism>
<name>PLSX_LATSS</name>
<keyword id="KW-0963">Cytoplasm</keyword>
<keyword id="KW-0444">Lipid biosynthesis</keyword>
<keyword id="KW-0443">Lipid metabolism</keyword>
<keyword id="KW-0594">Phospholipid biosynthesis</keyword>
<keyword id="KW-1208">Phospholipid metabolism</keyword>
<keyword id="KW-1185">Reference proteome</keyword>
<keyword id="KW-0808">Transferase</keyword>
<comment type="function">
    <text evidence="1">Catalyzes the reversible formation of acyl-phosphate (acyl-PO(4)) from acyl-[acyl-carrier-protein] (acyl-ACP). This enzyme utilizes acyl-ACP as fatty acyl donor, but not acyl-CoA.</text>
</comment>
<comment type="catalytic activity">
    <reaction evidence="1">
        <text>a fatty acyl-[ACP] + phosphate = an acyl phosphate + holo-[ACP]</text>
        <dbReference type="Rhea" id="RHEA:42292"/>
        <dbReference type="Rhea" id="RHEA-COMP:9685"/>
        <dbReference type="Rhea" id="RHEA-COMP:14125"/>
        <dbReference type="ChEBI" id="CHEBI:43474"/>
        <dbReference type="ChEBI" id="CHEBI:59918"/>
        <dbReference type="ChEBI" id="CHEBI:64479"/>
        <dbReference type="ChEBI" id="CHEBI:138651"/>
        <dbReference type="EC" id="2.3.1.274"/>
    </reaction>
</comment>
<comment type="pathway">
    <text evidence="1">Lipid metabolism; phospholipid metabolism.</text>
</comment>
<comment type="subunit">
    <text evidence="1">Homodimer. Probably interacts with PlsY.</text>
</comment>
<comment type="subcellular location">
    <subcellularLocation>
        <location evidence="1">Cytoplasm</location>
    </subcellularLocation>
    <text evidence="1">Associated with the membrane possibly through PlsY.</text>
</comment>
<comment type="similarity">
    <text evidence="1">Belongs to the PlsX family.</text>
</comment>
<feature type="chain" id="PRO_1000001781" description="Phosphate acyltransferase">
    <location>
        <begin position="1"/>
        <end position="337"/>
    </location>
</feature>
<sequence>MKVAVDAMGGDFAPQSVIEGVLQARSEFTDLDFILYGDQAQIEPLIDDMTRLTIVHTTEKIASDDEPVRAIRRKKQASMVLAAQAVKDGQADALFSLGNTGALLAAGLFIIGRVKGIDRPGLMPTLPSINSDQGFNMLDVGANAEAKPEHLHQYGLMGNFYAKDVRGIENPRIALLNNGTEATKGDELHKATYQLLADDPDLNFVGNVEANDLLKGVADVVVTDGFTGNATLKAIEGTATIVMSQVKHAIMDAGVKEKIGGLLLRGSVGGIREKFDTSIYGGAVLLGLKAPVIKAHGAADARTVYYTVKQIHAMLANQTVQKVIDYFSDQAAQKNSN</sequence>
<dbReference type="EC" id="2.3.1.274" evidence="1"/>
<dbReference type="EMBL" id="CR936503">
    <property type="protein sequence ID" value="CAI55004.1"/>
    <property type="molecule type" value="Genomic_DNA"/>
</dbReference>
<dbReference type="RefSeq" id="WP_011374408.1">
    <property type="nucleotide sequence ID" value="NC_007576.1"/>
</dbReference>
<dbReference type="SMR" id="Q38XS5"/>
<dbReference type="STRING" id="314315.LCA_0700"/>
<dbReference type="KEGG" id="lsa:LCA_0700"/>
<dbReference type="eggNOG" id="COG0416">
    <property type="taxonomic scope" value="Bacteria"/>
</dbReference>
<dbReference type="HOGENOM" id="CLU_039379_1_1_9"/>
<dbReference type="OrthoDB" id="9806408at2"/>
<dbReference type="UniPathway" id="UPA00085"/>
<dbReference type="Proteomes" id="UP000002707">
    <property type="component" value="Chromosome"/>
</dbReference>
<dbReference type="GO" id="GO:0005737">
    <property type="term" value="C:cytoplasm"/>
    <property type="evidence" value="ECO:0007669"/>
    <property type="project" value="UniProtKB-SubCell"/>
</dbReference>
<dbReference type="GO" id="GO:0043811">
    <property type="term" value="F:phosphate:acyl-[acyl carrier protein] acyltransferase activity"/>
    <property type="evidence" value="ECO:0007669"/>
    <property type="project" value="UniProtKB-UniRule"/>
</dbReference>
<dbReference type="GO" id="GO:0006633">
    <property type="term" value="P:fatty acid biosynthetic process"/>
    <property type="evidence" value="ECO:0007669"/>
    <property type="project" value="UniProtKB-UniRule"/>
</dbReference>
<dbReference type="GO" id="GO:0008654">
    <property type="term" value="P:phospholipid biosynthetic process"/>
    <property type="evidence" value="ECO:0007669"/>
    <property type="project" value="UniProtKB-KW"/>
</dbReference>
<dbReference type="Gene3D" id="3.40.718.10">
    <property type="entry name" value="Isopropylmalate Dehydrogenase"/>
    <property type="match status" value="1"/>
</dbReference>
<dbReference type="HAMAP" id="MF_00019">
    <property type="entry name" value="PlsX"/>
    <property type="match status" value="1"/>
</dbReference>
<dbReference type="InterPro" id="IPR003664">
    <property type="entry name" value="FA_synthesis"/>
</dbReference>
<dbReference type="InterPro" id="IPR012281">
    <property type="entry name" value="Phospholipid_synth_PlsX-like"/>
</dbReference>
<dbReference type="NCBIfam" id="TIGR00182">
    <property type="entry name" value="plsX"/>
    <property type="match status" value="1"/>
</dbReference>
<dbReference type="PANTHER" id="PTHR30100">
    <property type="entry name" value="FATTY ACID/PHOSPHOLIPID SYNTHESIS PROTEIN PLSX"/>
    <property type="match status" value="1"/>
</dbReference>
<dbReference type="PANTHER" id="PTHR30100:SF1">
    <property type="entry name" value="PHOSPHATE ACYLTRANSFERASE"/>
    <property type="match status" value="1"/>
</dbReference>
<dbReference type="Pfam" id="PF02504">
    <property type="entry name" value="FA_synthesis"/>
    <property type="match status" value="1"/>
</dbReference>
<dbReference type="PIRSF" id="PIRSF002465">
    <property type="entry name" value="Phsphlp_syn_PlsX"/>
    <property type="match status" value="1"/>
</dbReference>
<dbReference type="SUPFAM" id="SSF53659">
    <property type="entry name" value="Isocitrate/Isopropylmalate dehydrogenase-like"/>
    <property type="match status" value="1"/>
</dbReference>
<proteinExistence type="inferred from homology"/>